<feature type="chain" id="PRO_0000063534" description="Chaperonin GroEL">
    <location>
        <begin position="1"/>
        <end position="538"/>
    </location>
</feature>
<feature type="binding site" evidence="1">
    <location>
        <begin position="29"/>
        <end position="32"/>
    </location>
    <ligand>
        <name>ATP</name>
        <dbReference type="ChEBI" id="CHEBI:30616"/>
    </ligand>
</feature>
<feature type="binding site" evidence="1">
    <location>
        <begin position="86"/>
        <end position="90"/>
    </location>
    <ligand>
        <name>ATP</name>
        <dbReference type="ChEBI" id="CHEBI:30616"/>
    </ligand>
</feature>
<feature type="binding site" evidence="1">
    <location>
        <position position="413"/>
    </location>
    <ligand>
        <name>ATP</name>
        <dbReference type="ChEBI" id="CHEBI:30616"/>
    </ligand>
</feature>
<feature type="binding site" evidence="1">
    <location>
        <begin position="476"/>
        <end position="478"/>
    </location>
    <ligand>
        <name>ATP</name>
        <dbReference type="ChEBI" id="CHEBI:30616"/>
    </ligand>
</feature>
<feature type="binding site" evidence="1">
    <location>
        <position position="492"/>
    </location>
    <ligand>
        <name>ATP</name>
        <dbReference type="ChEBI" id="CHEBI:30616"/>
    </ligand>
</feature>
<accession>Q6GF43</accession>
<comment type="function">
    <text evidence="1">Together with its co-chaperonin GroES, plays an essential role in assisting protein folding. The GroEL-GroES system forms a nano-cage that allows encapsulation of the non-native substrate proteins and provides a physical environment optimized to promote and accelerate protein folding.</text>
</comment>
<comment type="catalytic activity">
    <reaction evidence="1">
        <text>ATP + H2O + a folded polypeptide = ADP + phosphate + an unfolded polypeptide.</text>
        <dbReference type="EC" id="5.6.1.7"/>
    </reaction>
</comment>
<comment type="subunit">
    <text evidence="1">Forms a cylinder of 14 subunits composed of two heptameric rings stacked back-to-back. Interacts with the co-chaperonin GroES.</text>
</comment>
<comment type="subcellular location">
    <subcellularLocation>
        <location evidence="1">Cytoplasm</location>
    </subcellularLocation>
</comment>
<comment type="similarity">
    <text evidence="1">Belongs to the chaperonin (HSP60) family.</text>
</comment>
<gene>
    <name evidence="1" type="primary">groEL</name>
    <name evidence="1" type="synonym">groL</name>
    <name type="ordered locus">SAR2116</name>
</gene>
<sequence length="538" mass="57614">MVKQLKFSEDARQAMLRGVDQLANAVKVTIGPKGRNVVLDKEFTAPLITNDGVTIAKEIELEDPYENMGAKLVQEVANKTNEIAGDGTTTATVLAQAMIQEGLKNVTSGANPVGLRQGIDKAVKVAVEALHENSQKVENKNEIAQVGAISAADEEIGRYISEAMEKVGNDGVITIEESNGLNTELEVVEGMQFDRGYQSPYMVTDSDKMVAELERPYILVTDKKISSFQDILPLLEQVVQSNRPILIVADEVEGDALTNIVLNRMRGTFTAVAVKAPGFGDRRKAMLEDLAILTGAQVITDDLGLDLKDATIDMLGTASKVEVTKDNTTVVDGDGDENSIDARVSQLKSQIEETESDFDREKLQERLAKLAGGVAVIKVGAASETELKERKLRIEDALNSTRAAVEEGIVAGGGTALVNVYQKVSEIEAEGDIETGVNIVLKALTAPVRQIAENAGLEGSVIVERLKNAEPGVGFNAATNEWVNMLEVGIVDPTKVTRSALQHAASVAAMFLTTEAVVASIPEKNNDQPNMGGMPGMM</sequence>
<protein>
    <recommendedName>
        <fullName evidence="1">Chaperonin GroEL</fullName>
        <ecNumber evidence="1">5.6.1.7</ecNumber>
    </recommendedName>
    <alternativeName>
        <fullName evidence="1">60 kDa chaperonin</fullName>
    </alternativeName>
    <alternativeName>
        <fullName evidence="1">Chaperonin-60</fullName>
        <shortName evidence="1">Cpn60</shortName>
    </alternativeName>
</protein>
<reference key="1">
    <citation type="journal article" date="2004" name="Proc. Natl. Acad. Sci. U.S.A.">
        <title>Complete genomes of two clinical Staphylococcus aureus strains: evidence for the rapid evolution of virulence and drug resistance.</title>
        <authorList>
            <person name="Holden M.T.G."/>
            <person name="Feil E.J."/>
            <person name="Lindsay J.A."/>
            <person name="Peacock S.J."/>
            <person name="Day N.P.J."/>
            <person name="Enright M.C."/>
            <person name="Foster T.J."/>
            <person name="Moore C.E."/>
            <person name="Hurst L."/>
            <person name="Atkin R."/>
            <person name="Barron A."/>
            <person name="Bason N."/>
            <person name="Bentley S.D."/>
            <person name="Chillingworth C."/>
            <person name="Chillingworth T."/>
            <person name="Churcher C."/>
            <person name="Clark L."/>
            <person name="Corton C."/>
            <person name="Cronin A."/>
            <person name="Doggett J."/>
            <person name="Dowd L."/>
            <person name="Feltwell T."/>
            <person name="Hance Z."/>
            <person name="Harris B."/>
            <person name="Hauser H."/>
            <person name="Holroyd S."/>
            <person name="Jagels K."/>
            <person name="James K.D."/>
            <person name="Lennard N."/>
            <person name="Line A."/>
            <person name="Mayes R."/>
            <person name="Moule S."/>
            <person name="Mungall K."/>
            <person name="Ormond D."/>
            <person name="Quail M.A."/>
            <person name="Rabbinowitsch E."/>
            <person name="Rutherford K.M."/>
            <person name="Sanders M."/>
            <person name="Sharp S."/>
            <person name="Simmonds M."/>
            <person name="Stevens K."/>
            <person name="Whitehead S."/>
            <person name="Barrell B.G."/>
            <person name="Spratt B.G."/>
            <person name="Parkhill J."/>
        </authorList>
    </citation>
    <scope>NUCLEOTIDE SEQUENCE [LARGE SCALE GENOMIC DNA]</scope>
    <source>
        <strain>MRSA252</strain>
    </source>
</reference>
<dbReference type="EC" id="5.6.1.7" evidence="1"/>
<dbReference type="EMBL" id="BX571856">
    <property type="protein sequence ID" value="CAG41097.1"/>
    <property type="molecule type" value="Genomic_DNA"/>
</dbReference>
<dbReference type="RefSeq" id="WP_000240651.1">
    <property type="nucleotide sequence ID" value="NC_002952.2"/>
</dbReference>
<dbReference type="SMR" id="Q6GF43"/>
<dbReference type="KEGG" id="sar:SAR2116"/>
<dbReference type="HOGENOM" id="CLU_016503_3_0_9"/>
<dbReference type="Proteomes" id="UP000000596">
    <property type="component" value="Chromosome"/>
</dbReference>
<dbReference type="GO" id="GO:0005737">
    <property type="term" value="C:cytoplasm"/>
    <property type="evidence" value="ECO:0007669"/>
    <property type="project" value="UniProtKB-SubCell"/>
</dbReference>
<dbReference type="GO" id="GO:0005524">
    <property type="term" value="F:ATP binding"/>
    <property type="evidence" value="ECO:0007669"/>
    <property type="project" value="UniProtKB-UniRule"/>
</dbReference>
<dbReference type="GO" id="GO:0140662">
    <property type="term" value="F:ATP-dependent protein folding chaperone"/>
    <property type="evidence" value="ECO:0007669"/>
    <property type="project" value="InterPro"/>
</dbReference>
<dbReference type="GO" id="GO:0016853">
    <property type="term" value="F:isomerase activity"/>
    <property type="evidence" value="ECO:0007669"/>
    <property type="project" value="UniProtKB-KW"/>
</dbReference>
<dbReference type="GO" id="GO:0051082">
    <property type="term" value="F:unfolded protein binding"/>
    <property type="evidence" value="ECO:0007669"/>
    <property type="project" value="UniProtKB-UniRule"/>
</dbReference>
<dbReference type="GO" id="GO:0042026">
    <property type="term" value="P:protein refolding"/>
    <property type="evidence" value="ECO:0007669"/>
    <property type="project" value="UniProtKB-UniRule"/>
</dbReference>
<dbReference type="CDD" id="cd03344">
    <property type="entry name" value="GroEL"/>
    <property type="match status" value="1"/>
</dbReference>
<dbReference type="FunFam" id="1.10.560.10:FF:000001">
    <property type="entry name" value="60 kDa chaperonin"/>
    <property type="match status" value="1"/>
</dbReference>
<dbReference type="FunFam" id="3.50.7.10:FF:000001">
    <property type="entry name" value="60 kDa chaperonin"/>
    <property type="match status" value="1"/>
</dbReference>
<dbReference type="Gene3D" id="3.50.7.10">
    <property type="entry name" value="GroEL"/>
    <property type="match status" value="1"/>
</dbReference>
<dbReference type="Gene3D" id="1.10.560.10">
    <property type="entry name" value="GroEL-like equatorial domain"/>
    <property type="match status" value="1"/>
</dbReference>
<dbReference type="Gene3D" id="3.30.260.10">
    <property type="entry name" value="TCP-1-like chaperonin intermediate domain"/>
    <property type="match status" value="1"/>
</dbReference>
<dbReference type="HAMAP" id="MF_00600">
    <property type="entry name" value="CH60"/>
    <property type="match status" value="1"/>
</dbReference>
<dbReference type="InterPro" id="IPR018370">
    <property type="entry name" value="Chaperonin_Cpn60_CS"/>
</dbReference>
<dbReference type="InterPro" id="IPR001844">
    <property type="entry name" value="Cpn60/GroEL"/>
</dbReference>
<dbReference type="InterPro" id="IPR002423">
    <property type="entry name" value="Cpn60/GroEL/TCP-1"/>
</dbReference>
<dbReference type="InterPro" id="IPR027409">
    <property type="entry name" value="GroEL-like_apical_dom_sf"/>
</dbReference>
<dbReference type="InterPro" id="IPR027413">
    <property type="entry name" value="GROEL-like_equatorial_sf"/>
</dbReference>
<dbReference type="InterPro" id="IPR027410">
    <property type="entry name" value="TCP-1-like_intermed_sf"/>
</dbReference>
<dbReference type="NCBIfam" id="TIGR02348">
    <property type="entry name" value="GroEL"/>
    <property type="match status" value="1"/>
</dbReference>
<dbReference type="NCBIfam" id="NF000592">
    <property type="entry name" value="PRK00013.1"/>
    <property type="match status" value="1"/>
</dbReference>
<dbReference type="NCBIfam" id="NF009487">
    <property type="entry name" value="PRK12849.1"/>
    <property type="match status" value="1"/>
</dbReference>
<dbReference type="NCBIfam" id="NF009488">
    <property type="entry name" value="PRK12850.1"/>
    <property type="match status" value="1"/>
</dbReference>
<dbReference type="NCBIfam" id="NF009489">
    <property type="entry name" value="PRK12851.1"/>
    <property type="match status" value="1"/>
</dbReference>
<dbReference type="PANTHER" id="PTHR45633">
    <property type="entry name" value="60 KDA HEAT SHOCK PROTEIN, MITOCHONDRIAL"/>
    <property type="match status" value="1"/>
</dbReference>
<dbReference type="Pfam" id="PF00118">
    <property type="entry name" value="Cpn60_TCP1"/>
    <property type="match status" value="1"/>
</dbReference>
<dbReference type="PRINTS" id="PR00298">
    <property type="entry name" value="CHAPERONIN60"/>
</dbReference>
<dbReference type="SUPFAM" id="SSF52029">
    <property type="entry name" value="GroEL apical domain-like"/>
    <property type="match status" value="1"/>
</dbReference>
<dbReference type="SUPFAM" id="SSF48592">
    <property type="entry name" value="GroEL equatorial domain-like"/>
    <property type="match status" value="1"/>
</dbReference>
<dbReference type="SUPFAM" id="SSF54849">
    <property type="entry name" value="GroEL-intermediate domain like"/>
    <property type="match status" value="1"/>
</dbReference>
<dbReference type="PROSITE" id="PS00296">
    <property type="entry name" value="CHAPERONINS_CPN60"/>
    <property type="match status" value="1"/>
</dbReference>
<proteinExistence type="inferred from homology"/>
<evidence type="ECO:0000255" key="1">
    <source>
        <dbReference type="HAMAP-Rule" id="MF_00600"/>
    </source>
</evidence>
<organism>
    <name type="scientific">Staphylococcus aureus (strain MRSA252)</name>
    <dbReference type="NCBI Taxonomy" id="282458"/>
    <lineage>
        <taxon>Bacteria</taxon>
        <taxon>Bacillati</taxon>
        <taxon>Bacillota</taxon>
        <taxon>Bacilli</taxon>
        <taxon>Bacillales</taxon>
        <taxon>Staphylococcaceae</taxon>
        <taxon>Staphylococcus</taxon>
    </lineage>
</organism>
<keyword id="KW-0067">ATP-binding</keyword>
<keyword id="KW-0143">Chaperone</keyword>
<keyword id="KW-0963">Cytoplasm</keyword>
<keyword id="KW-0413">Isomerase</keyword>
<keyword id="KW-0547">Nucleotide-binding</keyword>
<name>CH60_STAAR</name>